<comment type="subunit">
    <text>Part of the 30S ribosomal subunit.</text>
</comment>
<comment type="subcellular location">
    <subcellularLocation>
        <location>Plastid</location>
        <location>Chloroplast</location>
    </subcellularLocation>
</comment>
<comment type="similarity">
    <text evidence="1">Belongs to the bacterial ribosomal protein bS18 family.</text>
</comment>
<proteinExistence type="inferred from homology"/>
<reference key="1">
    <citation type="journal article" date="2006" name="BMC Evol. Biol.">
        <title>Complete plastid genome sequences of Drimys, Liriodendron, and Piper: implications for the phylogenetic relationships of magnoliids.</title>
        <authorList>
            <person name="Cai Z."/>
            <person name="Penaflor C."/>
            <person name="Kuehl J.V."/>
            <person name="Leebens-Mack J."/>
            <person name="Carlson J.E."/>
            <person name="dePamphilis C.W."/>
            <person name="Boore J.L."/>
            <person name="Jansen R.K."/>
        </authorList>
    </citation>
    <scope>NUCLEOTIDE SEQUENCE [LARGE SCALE GENOMIC DNA]</scope>
</reference>
<feature type="chain" id="PRO_0000276867" description="Small ribosomal subunit protein bS18c">
    <location>
        <begin position="1"/>
        <end position="101"/>
    </location>
</feature>
<feature type="region of interest" description="Disordered" evidence="2">
    <location>
        <begin position="1"/>
        <end position="23"/>
    </location>
</feature>
<feature type="region of interest" description="Disordered" evidence="2">
    <location>
        <begin position="82"/>
        <end position="101"/>
    </location>
</feature>
<feature type="compositionally biased region" description="Basic residues" evidence="2">
    <location>
        <begin position="1"/>
        <end position="19"/>
    </location>
</feature>
<organism>
    <name type="scientific">Drimys granadensis</name>
    <dbReference type="NCBI Taxonomy" id="224735"/>
    <lineage>
        <taxon>Eukaryota</taxon>
        <taxon>Viridiplantae</taxon>
        <taxon>Streptophyta</taxon>
        <taxon>Embryophyta</taxon>
        <taxon>Tracheophyta</taxon>
        <taxon>Spermatophyta</taxon>
        <taxon>Magnoliopsida</taxon>
        <taxon>Magnoliidae</taxon>
        <taxon>Canellales</taxon>
        <taxon>Winteraceae</taxon>
        <taxon>Drimys</taxon>
    </lineage>
</organism>
<sequence length="101" mass="11914">MDKSKRPFRKSKRSFRRRLPPIGSGDRIDYRNMSLISRFISEQGKILSRRVNRLTLKQQRLITIAIKQARILSSLPFLNNEKQFERTESTPRTAGPKTRNK</sequence>
<accession>Q06GX5</accession>
<gene>
    <name evidence="1" type="primary">rps18</name>
</gene>
<evidence type="ECO:0000255" key="1">
    <source>
        <dbReference type="HAMAP-Rule" id="MF_00270"/>
    </source>
</evidence>
<evidence type="ECO:0000256" key="2">
    <source>
        <dbReference type="SAM" id="MobiDB-lite"/>
    </source>
</evidence>
<evidence type="ECO:0000305" key="3"/>
<dbReference type="EMBL" id="DQ887676">
    <property type="protein sequence ID" value="ABH88319.1"/>
    <property type="molecule type" value="Genomic_DNA"/>
</dbReference>
<dbReference type="RefSeq" id="YP_784408.1">
    <property type="nucleotide sequence ID" value="NC_008456.1"/>
</dbReference>
<dbReference type="SMR" id="Q06GX5"/>
<dbReference type="GeneID" id="4363594"/>
<dbReference type="GO" id="GO:0009507">
    <property type="term" value="C:chloroplast"/>
    <property type="evidence" value="ECO:0007669"/>
    <property type="project" value="UniProtKB-SubCell"/>
</dbReference>
<dbReference type="GO" id="GO:0005763">
    <property type="term" value="C:mitochondrial small ribosomal subunit"/>
    <property type="evidence" value="ECO:0007669"/>
    <property type="project" value="TreeGrafter"/>
</dbReference>
<dbReference type="GO" id="GO:0070181">
    <property type="term" value="F:small ribosomal subunit rRNA binding"/>
    <property type="evidence" value="ECO:0007669"/>
    <property type="project" value="TreeGrafter"/>
</dbReference>
<dbReference type="GO" id="GO:0003735">
    <property type="term" value="F:structural constituent of ribosome"/>
    <property type="evidence" value="ECO:0007669"/>
    <property type="project" value="InterPro"/>
</dbReference>
<dbReference type="GO" id="GO:0006412">
    <property type="term" value="P:translation"/>
    <property type="evidence" value="ECO:0007669"/>
    <property type="project" value="UniProtKB-UniRule"/>
</dbReference>
<dbReference type="FunFam" id="4.10.640.10:FF:000002">
    <property type="entry name" value="30S ribosomal protein S18, chloroplastic"/>
    <property type="match status" value="1"/>
</dbReference>
<dbReference type="Gene3D" id="4.10.640.10">
    <property type="entry name" value="Ribosomal protein S18"/>
    <property type="match status" value="1"/>
</dbReference>
<dbReference type="HAMAP" id="MF_00270">
    <property type="entry name" value="Ribosomal_bS18"/>
    <property type="match status" value="1"/>
</dbReference>
<dbReference type="InterPro" id="IPR001648">
    <property type="entry name" value="Ribosomal_bS18"/>
</dbReference>
<dbReference type="InterPro" id="IPR018275">
    <property type="entry name" value="Ribosomal_bS18_CS"/>
</dbReference>
<dbReference type="InterPro" id="IPR036870">
    <property type="entry name" value="Ribosomal_bS18_sf"/>
</dbReference>
<dbReference type="NCBIfam" id="TIGR00165">
    <property type="entry name" value="S18"/>
    <property type="match status" value="1"/>
</dbReference>
<dbReference type="PANTHER" id="PTHR13479">
    <property type="entry name" value="30S RIBOSOMAL PROTEIN S18"/>
    <property type="match status" value="1"/>
</dbReference>
<dbReference type="PANTHER" id="PTHR13479:SF40">
    <property type="entry name" value="SMALL RIBOSOMAL SUBUNIT PROTEIN BS18M"/>
    <property type="match status" value="1"/>
</dbReference>
<dbReference type="Pfam" id="PF01084">
    <property type="entry name" value="Ribosomal_S18"/>
    <property type="match status" value="1"/>
</dbReference>
<dbReference type="PRINTS" id="PR00974">
    <property type="entry name" value="RIBOSOMALS18"/>
</dbReference>
<dbReference type="SUPFAM" id="SSF46911">
    <property type="entry name" value="Ribosomal protein S18"/>
    <property type="match status" value="1"/>
</dbReference>
<dbReference type="PROSITE" id="PS00057">
    <property type="entry name" value="RIBOSOMAL_S18"/>
    <property type="match status" value="1"/>
</dbReference>
<name>RR18_DRIGR</name>
<geneLocation type="chloroplast"/>
<protein>
    <recommendedName>
        <fullName evidence="1">Small ribosomal subunit protein bS18c</fullName>
    </recommendedName>
    <alternativeName>
        <fullName evidence="3">30S ribosomal protein S18, chloroplastic</fullName>
    </alternativeName>
</protein>
<keyword id="KW-0150">Chloroplast</keyword>
<keyword id="KW-0934">Plastid</keyword>
<keyword id="KW-0687">Ribonucleoprotein</keyword>
<keyword id="KW-0689">Ribosomal protein</keyword>
<keyword id="KW-0694">RNA-binding</keyword>
<keyword id="KW-0699">rRNA-binding</keyword>